<keyword id="KW-0997">Cell inner membrane</keyword>
<keyword id="KW-1003">Cell membrane</keyword>
<keyword id="KW-0378">Hydrolase</keyword>
<keyword id="KW-0472">Membrane</keyword>
<keyword id="KW-0645">Protease</keyword>
<keyword id="KW-1185">Reference proteome</keyword>
<keyword id="KW-0812">Transmembrane</keyword>
<keyword id="KW-1133">Transmembrane helix</keyword>
<sequence>MTLNFPLLLVIAVAVCGALALVDLVLFAPRRRAAISSYEGQVNEPDPAVLEKLNKEPLLVEYGKSFFPVLFIVLVLRSFLVEPFQIPSGSMKPTLEVGDFILVNKFAYGIRLPVLDTKVIPIGDPQRGDVMVFRYPSEPNINYIKRVVGLPGDTVRYTKEKRLYVNGELVAEKLVGEEPGTLGSVTLYQEKLGQAEHLIRKEMSRYRIEPDRQWTIPAGHYFMMGDNRDNSNDSRYWNDPKIPKDLLGMVPDRNIVGKAFAVWMSWPDPKMSNLPNFSRVGVIH</sequence>
<dbReference type="EC" id="3.4.21.89"/>
<dbReference type="EMBL" id="AE004091">
    <property type="protein sequence ID" value="AAG04157.1"/>
    <property type="molecule type" value="Genomic_DNA"/>
</dbReference>
<dbReference type="PIR" id="H83550">
    <property type="entry name" value="H83550"/>
</dbReference>
<dbReference type="RefSeq" id="NP_249459.1">
    <property type="nucleotide sequence ID" value="NC_002516.2"/>
</dbReference>
<dbReference type="RefSeq" id="WP_003101969.1">
    <property type="nucleotide sequence ID" value="NZ_QZGE01000007.1"/>
</dbReference>
<dbReference type="SMR" id="Q9I5G7"/>
<dbReference type="FunCoup" id="Q9I5G7">
    <property type="interactions" value="403"/>
</dbReference>
<dbReference type="STRING" id="208964.PA0768"/>
<dbReference type="MEROPS" id="S26.001"/>
<dbReference type="PaxDb" id="208964-PA0768"/>
<dbReference type="DNASU" id="882104"/>
<dbReference type="GeneID" id="882104"/>
<dbReference type="KEGG" id="pae:PA0768"/>
<dbReference type="PATRIC" id="fig|208964.12.peg.798"/>
<dbReference type="PseudoCAP" id="PA0768"/>
<dbReference type="HOGENOM" id="CLU_028723_1_1_6"/>
<dbReference type="InParanoid" id="Q9I5G7"/>
<dbReference type="OrthoDB" id="9815782at2"/>
<dbReference type="PhylomeDB" id="Q9I5G7"/>
<dbReference type="BioCyc" id="PAER208964:G1FZ6-781-MONOMER"/>
<dbReference type="BRENDA" id="3.4.21.89">
    <property type="organism ID" value="5087"/>
</dbReference>
<dbReference type="Proteomes" id="UP000002438">
    <property type="component" value="Chromosome"/>
</dbReference>
<dbReference type="GO" id="GO:0005886">
    <property type="term" value="C:plasma membrane"/>
    <property type="evidence" value="ECO:0000318"/>
    <property type="project" value="GO_Central"/>
</dbReference>
<dbReference type="GO" id="GO:0008233">
    <property type="term" value="F:peptidase activity"/>
    <property type="evidence" value="ECO:0000314"/>
    <property type="project" value="PseudoCAP"/>
</dbReference>
<dbReference type="GO" id="GO:0004252">
    <property type="term" value="F:serine-type endopeptidase activity"/>
    <property type="evidence" value="ECO:0000318"/>
    <property type="project" value="GO_Central"/>
</dbReference>
<dbReference type="GO" id="GO:0006465">
    <property type="term" value="P:signal peptide processing"/>
    <property type="evidence" value="ECO:0000318"/>
    <property type="project" value="GO_Central"/>
</dbReference>
<dbReference type="CDD" id="cd06530">
    <property type="entry name" value="S26_SPase_I"/>
    <property type="match status" value="1"/>
</dbReference>
<dbReference type="Gene3D" id="2.10.109.10">
    <property type="entry name" value="Umud Fragment, subunit A"/>
    <property type="match status" value="1"/>
</dbReference>
<dbReference type="InterPro" id="IPR036286">
    <property type="entry name" value="LexA/Signal_pep-like_sf"/>
</dbReference>
<dbReference type="InterPro" id="IPR000223">
    <property type="entry name" value="Pept_S26A_signal_pept_1"/>
</dbReference>
<dbReference type="InterPro" id="IPR019758">
    <property type="entry name" value="Pept_S26A_signal_pept_1_CS"/>
</dbReference>
<dbReference type="InterPro" id="IPR019757">
    <property type="entry name" value="Pept_S26A_signal_pept_1_Lys-AS"/>
</dbReference>
<dbReference type="InterPro" id="IPR019756">
    <property type="entry name" value="Pept_S26A_signal_pept_1_Ser-AS"/>
</dbReference>
<dbReference type="InterPro" id="IPR019533">
    <property type="entry name" value="Peptidase_S26"/>
</dbReference>
<dbReference type="NCBIfam" id="TIGR02227">
    <property type="entry name" value="sigpep_I_bact"/>
    <property type="match status" value="1"/>
</dbReference>
<dbReference type="PANTHER" id="PTHR43390:SF1">
    <property type="entry name" value="CHLOROPLAST PROCESSING PEPTIDASE"/>
    <property type="match status" value="1"/>
</dbReference>
<dbReference type="PANTHER" id="PTHR43390">
    <property type="entry name" value="SIGNAL PEPTIDASE I"/>
    <property type="match status" value="1"/>
</dbReference>
<dbReference type="Pfam" id="PF10502">
    <property type="entry name" value="Peptidase_S26"/>
    <property type="match status" value="1"/>
</dbReference>
<dbReference type="PRINTS" id="PR00727">
    <property type="entry name" value="LEADERPTASE"/>
</dbReference>
<dbReference type="SUPFAM" id="SSF51306">
    <property type="entry name" value="LexA/Signal peptidase"/>
    <property type="match status" value="1"/>
</dbReference>
<dbReference type="PROSITE" id="PS00501">
    <property type="entry name" value="SPASE_I_1"/>
    <property type="match status" value="1"/>
</dbReference>
<dbReference type="PROSITE" id="PS00760">
    <property type="entry name" value="SPASE_I_2"/>
    <property type="match status" value="1"/>
</dbReference>
<dbReference type="PROSITE" id="PS00761">
    <property type="entry name" value="SPASE_I_3"/>
    <property type="match status" value="1"/>
</dbReference>
<proteinExistence type="inferred from homology"/>
<accession>Q9I5G7</accession>
<protein>
    <recommendedName>
        <fullName>Signal peptidase I</fullName>
        <shortName>SPase I</shortName>
        <ecNumber>3.4.21.89</ecNumber>
    </recommendedName>
    <alternativeName>
        <fullName>Leader peptidase I</fullName>
    </alternativeName>
</protein>
<reference key="1">
    <citation type="journal article" date="2000" name="Nature">
        <title>Complete genome sequence of Pseudomonas aeruginosa PAO1, an opportunistic pathogen.</title>
        <authorList>
            <person name="Stover C.K."/>
            <person name="Pham X.-Q.T."/>
            <person name="Erwin A.L."/>
            <person name="Mizoguchi S.D."/>
            <person name="Warrener P."/>
            <person name="Hickey M.J."/>
            <person name="Brinkman F.S.L."/>
            <person name="Hufnagle W.O."/>
            <person name="Kowalik D.J."/>
            <person name="Lagrou M."/>
            <person name="Garber R.L."/>
            <person name="Goltry L."/>
            <person name="Tolentino E."/>
            <person name="Westbrock-Wadman S."/>
            <person name="Yuan Y."/>
            <person name="Brody L.L."/>
            <person name="Coulter S.N."/>
            <person name="Folger K.R."/>
            <person name="Kas A."/>
            <person name="Larbig K."/>
            <person name="Lim R.M."/>
            <person name="Smith K.A."/>
            <person name="Spencer D.H."/>
            <person name="Wong G.K.-S."/>
            <person name="Wu Z."/>
            <person name="Paulsen I.T."/>
            <person name="Reizer J."/>
            <person name="Saier M.H. Jr."/>
            <person name="Hancock R.E.W."/>
            <person name="Lory S."/>
            <person name="Olson M.V."/>
        </authorList>
    </citation>
    <scope>NUCLEOTIDE SEQUENCE [LARGE SCALE GENOMIC DNA]</scope>
    <source>
        <strain>ATCC 15692 / DSM 22644 / CIP 104116 / JCM 14847 / LMG 12228 / 1C / PRS 101 / PAO1</strain>
    </source>
</reference>
<gene>
    <name type="primary">lepB</name>
    <name type="ordered locus">PA0768</name>
</gene>
<feature type="chain" id="PRO_0000109513" description="Signal peptidase I">
    <location>
        <begin position="1"/>
        <end position="284"/>
    </location>
</feature>
<feature type="transmembrane region" description="Helical" evidence="2">
    <location>
        <begin position="4"/>
        <end position="22"/>
    </location>
</feature>
<feature type="topological domain" description="Cytoplasmic" evidence="2">
    <location>
        <begin position="23"/>
        <end position="58"/>
    </location>
</feature>
<feature type="transmembrane region" description="Helical" evidence="2">
    <location>
        <begin position="59"/>
        <end position="77"/>
    </location>
</feature>
<feature type="topological domain" description="Periplasmic" evidence="2">
    <location>
        <begin position="78"/>
        <end position="284"/>
    </location>
</feature>
<feature type="active site" evidence="1">
    <location>
        <position position="90"/>
    </location>
</feature>
<feature type="active site" evidence="1">
    <location>
        <position position="145"/>
    </location>
</feature>
<name>LEP_PSEAE</name>
<evidence type="ECO:0000250" key="1"/>
<evidence type="ECO:0000255" key="2"/>
<evidence type="ECO:0000305" key="3"/>
<organism>
    <name type="scientific">Pseudomonas aeruginosa (strain ATCC 15692 / DSM 22644 / CIP 104116 / JCM 14847 / LMG 12228 / 1C / PRS 101 / PAO1)</name>
    <dbReference type="NCBI Taxonomy" id="208964"/>
    <lineage>
        <taxon>Bacteria</taxon>
        <taxon>Pseudomonadati</taxon>
        <taxon>Pseudomonadota</taxon>
        <taxon>Gammaproteobacteria</taxon>
        <taxon>Pseudomonadales</taxon>
        <taxon>Pseudomonadaceae</taxon>
        <taxon>Pseudomonas</taxon>
    </lineage>
</organism>
<comment type="catalytic activity">
    <reaction>
        <text>Cleavage of hydrophobic, N-terminal signal or leader sequences from secreted and periplasmic proteins.</text>
        <dbReference type="EC" id="3.4.21.89"/>
    </reaction>
</comment>
<comment type="subcellular location">
    <subcellularLocation>
        <location>Cell inner membrane</location>
        <topology>Multi-pass membrane protein</topology>
    </subcellularLocation>
</comment>
<comment type="similarity">
    <text evidence="3">Belongs to the peptidase S26 family.</text>
</comment>